<dbReference type="EC" id="2.1.3.2" evidence="1"/>
<dbReference type="EMBL" id="CP000250">
    <property type="protein sequence ID" value="ABD07129.1"/>
    <property type="molecule type" value="Genomic_DNA"/>
</dbReference>
<dbReference type="RefSeq" id="WP_011441314.1">
    <property type="nucleotide sequence ID" value="NC_007778.1"/>
</dbReference>
<dbReference type="SMR" id="Q2IXD1"/>
<dbReference type="STRING" id="316058.RPB_2424"/>
<dbReference type="KEGG" id="rpb:RPB_2424"/>
<dbReference type="eggNOG" id="COG0540">
    <property type="taxonomic scope" value="Bacteria"/>
</dbReference>
<dbReference type="HOGENOM" id="CLU_043846_2_0_5"/>
<dbReference type="OrthoDB" id="9774690at2"/>
<dbReference type="UniPathway" id="UPA00070">
    <property type="reaction ID" value="UER00116"/>
</dbReference>
<dbReference type="Proteomes" id="UP000008809">
    <property type="component" value="Chromosome"/>
</dbReference>
<dbReference type="GO" id="GO:0005829">
    <property type="term" value="C:cytosol"/>
    <property type="evidence" value="ECO:0007669"/>
    <property type="project" value="TreeGrafter"/>
</dbReference>
<dbReference type="GO" id="GO:0016597">
    <property type="term" value="F:amino acid binding"/>
    <property type="evidence" value="ECO:0007669"/>
    <property type="project" value="InterPro"/>
</dbReference>
<dbReference type="GO" id="GO:0004070">
    <property type="term" value="F:aspartate carbamoyltransferase activity"/>
    <property type="evidence" value="ECO:0007669"/>
    <property type="project" value="UniProtKB-UniRule"/>
</dbReference>
<dbReference type="GO" id="GO:0006207">
    <property type="term" value="P:'de novo' pyrimidine nucleobase biosynthetic process"/>
    <property type="evidence" value="ECO:0007669"/>
    <property type="project" value="InterPro"/>
</dbReference>
<dbReference type="GO" id="GO:0044205">
    <property type="term" value="P:'de novo' UMP biosynthetic process"/>
    <property type="evidence" value="ECO:0007669"/>
    <property type="project" value="UniProtKB-UniRule"/>
</dbReference>
<dbReference type="GO" id="GO:0006520">
    <property type="term" value="P:amino acid metabolic process"/>
    <property type="evidence" value="ECO:0007669"/>
    <property type="project" value="InterPro"/>
</dbReference>
<dbReference type="FunFam" id="3.40.50.1370:FF:000007">
    <property type="entry name" value="Aspartate carbamoyltransferase"/>
    <property type="match status" value="1"/>
</dbReference>
<dbReference type="Gene3D" id="3.40.50.1370">
    <property type="entry name" value="Aspartate/ornithine carbamoyltransferase"/>
    <property type="match status" value="2"/>
</dbReference>
<dbReference type="HAMAP" id="MF_00001">
    <property type="entry name" value="Asp_carb_tr"/>
    <property type="match status" value="1"/>
</dbReference>
<dbReference type="InterPro" id="IPR006132">
    <property type="entry name" value="Asp/Orn_carbamoyltranf_P-bd"/>
</dbReference>
<dbReference type="InterPro" id="IPR006130">
    <property type="entry name" value="Asp/Orn_carbamoylTrfase"/>
</dbReference>
<dbReference type="InterPro" id="IPR036901">
    <property type="entry name" value="Asp/Orn_carbamoylTrfase_sf"/>
</dbReference>
<dbReference type="InterPro" id="IPR002082">
    <property type="entry name" value="Asp_carbamoyltransf"/>
</dbReference>
<dbReference type="InterPro" id="IPR006131">
    <property type="entry name" value="Asp_carbamoyltransf_Asp/Orn-bd"/>
</dbReference>
<dbReference type="NCBIfam" id="TIGR00670">
    <property type="entry name" value="asp_carb_tr"/>
    <property type="match status" value="1"/>
</dbReference>
<dbReference type="NCBIfam" id="NF002032">
    <property type="entry name" value="PRK00856.1"/>
    <property type="match status" value="1"/>
</dbReference>
<dbReference type="PANTHER" id="PTHR45753:SF6">
    <property type="entry name" value="ASPARTATE CARBAMOYLTRANSFERASE"/>
    <property type="match status" value="1"/>
</dbReference>
<dbReference type="PANTHER" id="PTHR45753">
    <property type="entry name" value="ORNITHINE CARBAMOYLTRANSFERASE, MITOCHONDRIAL"/>
    <property type="match status" value="1"/>
</dbReference>
<dbReference type="Pfam" id="PF00185">
    <property type="entry name" value="OTCace"/>
    <property type="match status" value="1"/>
</dbReference>
<dbReference type="Pfam" id="PF02729">
    <property type="entry name" value="OTCace_N"/>
    <property type="match status" value="1"/>
</dbReference>
<dbReference type="PRINTS" id="PR00100">
    <property type="entry name" value="AOTCASE"/>
</dbReference>
<dbReference type="PRINTS" id="PR00101">
    <property type="entry name" value="ATCASE"/>
</dbReference>
<dbReference type="SUPFAM" id="SSF53671">
    <property type="entry name" value="Aspartate/ornithine carbamoyltransferase"/>
    <property type="match status" value="1"/>
</dbReference>
<dbReference type="PROSITE" id="PS00097">
    <property type="entry name" value="CARBAMOYLTRANSFERASE"/>
    <property type="match status" value="1"/>
</dbReference>
<keyword id="KW-0665">Pyrimidine biosynthesis</keyword>
<keyword id="KW-1185">Reference proteome</keyword>
<keyword id="KW-0808">Transferase</keyword>
<evidence type="ECO:0000255" key="1">
    <source>
        <dbReference type="HAMAP-Rule" id="MF_00001"/>
    </source>
</evidence>
<accession>Q2IXD1</accession>
<protein>
    <recommendedName>
        <fullName evidence="1">Aspartate carbamoyltransferase catalytic subunit</fullName>
        <ecNumber evidence="1">2.1.3.2</ecNumber>
    </recommendedName>
    <alternativeName>
        <fullName evidence="1">Aspartate transcarbamylase</fullName>
        <shortName evidence="1">ATCase</shortName>
    </alternativeName>
</protein>
<name>PYRB_RHOP2</name>
<comment type="function">
    <text evidence="1">Catalyzes the condensation of carbamoyl phosphate and aspartate to form carbamoyl aspartate and inorganic phosphate, the committed step in the de novo pyrimidine nucleotide biosynthesis pathway.</text>
</comment>
<comment type="catalytic activity">
    <reaction evidence="1">
        <text>carbamoyl phosphate + L-aspartate = N-carbamoyl-L-aspartate + phosphate + H(+)</text>
        <dbReference type="Rhea" id="RHEA:20013"/>
        <dbReference type="ChEBI" id="CHEBI:15378"/>
        <dbReference type="ChEBI" id="CHEBI:29991"/>
        <dbReference type="ChEBI" id="CHEBI:32814"/>
        <dbReference type="ChEBI" id="CHEBI:43474"/>
        <dbReference type="ChEBI" id="CHEBI:58228"/>
        <dbReference type="EC" id="2.1.3.2"/>
    </reaction>
</comment>
<comment type="pathway">
    <text evidence="1">Pyrimidine metabolism; UMP biosynthesis via de novo pathway; (S)-dihydroorotate from bicarbonate: step 2/3.</text>
</comment>
<comment type="subunit">
    <text evidence="1">Heterododecamer (2C3:3R2) of six catalytic PyrB chains organized as two trimers (C3), and six regulatory PyrI chains organized as three dimers (R2).</text>
</comment>
<comment type="similarity">
    <text evidence="1">Belongs to the aspartate/ornithine carbamoyltransferase superfamily. ATCase family.</text>
</comment>
<proteinExistence type="inferred from homology"/>
<organism>
    <name type="scientific">Rhodopseudomonas palustris (strain HaA2)</name>
    <dbReference type="NCBI Taxonomy" id="316058"/>
    <lineage>
        <taxon>Bacteria</taxon>
        <taxon>Pseudomonadati</taxon>
        <taxon>Pseudomonadota</taxon>
        <taxon>Alphaproteobacteria</taxon>
        <taxon>Hyphomicrobiales</taxon>
        <taxon>Nitrobacteraceae</taxon>
        <taxon>Rhodopseudomonas</taxon>
    </lineage>
</organism>
<feature type="chain" id="PRO_0000301615" description="Aspartate carbamoyltransferase catalytic subunit">
    <location>
        <begin position="1"/>
        <end position="317"/>
    </location>
</feature>
<feature type="binding site" evidence="1">
    <location>
        <position position="66"/>
    </location>
    <ligand>
        <name>carbamoyl phosphate</name>
        <dbReference type="ChEBI" id="CHEBI:58228"/>
    </ligand>
</feature>
<feature type="binding site" evidence="1">
    <location>
        <position position="67"/>
    </location>
    <ligand>
        <name>carbamoyl phosphate</name>
        <dbReference type="ChEBI" id="CHEBI:58228"/>
    </ligand>
</feature>
<feature type="binding site" evidence="1">
    <location>
        <position position="94"/>
    </location>
    <ligand>
        <name>L-aspartate</name>
        <dbReference type="ChEBI" id="CHEBI:29991"/>
    </ligand>
</feature>
<feature type="binding site" evidence="1">
    <location>
        <position position="116"/>
    </location>
    <ligand>
        <name>carbamoyl phosphate</name>
        <dbReference type="ChEBI" id="CHEBI:58228"/>
    </ligand>
</feature>
<feature type="binding site" evidence="1">
    <location>
        <position position="144"/>
    </location>
    <ligand>
        <name>carbamoyl phosphate</name>
        <dbReference type="ChEBI" id="CHEBI:58228"/>
    </ligand>
</feature>
<feature type="binding site" evidence="1">
    <location>
        <position position="147"/>
    </location>
    <ligand>
        <name>carbamoyl phosphate</name>
        <dbReference type="ChEBI" id="CHEBI:58228"/>
    </ligand>
</feature>
<feature type="binding site" evidence="1">
    <location>
        <position position="177"/>
    </location>
    <ligand>
        <name>L-aspartate</name>
        <dbReference type="ChEBI" id="CHEBI:29991"/>
    </ligand>
</feature>
<feature type="binding site" evidence="1">
    <location>
        <position position="231"/>
    </location>
    <ligand>
        <name>L-aspartate</name>
        <dbReference type="ChEBI" id="CHEBI:29991"/>
    </ligand>
</feature>
<feature type="binding site" evidence="1">
    <location>
        <position position="272"/>
    </location>
    <ligand>
        <name>carbamoyl phosphate</name>
        <dbReference type="ChEBI" id="CHEBI:58228"/>
    </ligand>
</feature>
<feature type="binding site" evidence="1">
    <location>
        <position position="273"/>
    </location>
    <ligand>
        <name>carbamoyl phosphate</name>
        <dbReference type="ChEBI" id="CHEBI:58228"/>
    </ligand>
</feature>
<sequence length="317" mass="34513">MTPALKSTFVLAHRHLLGIEGLSAADITGLLDLSEEYVELNRQVDKKRASLRGRTQVNLFFEASTRTQSSFEIAGKRLGADVMNMSVSSSSMRKGETLMDTAVTLNAMHPDILVVRHHASGAVELLARKVDGSVINAGDGAHEHPTQALLDALTIRRNKGRLEGLVVAICGDVMHSRVARSNILLLNTMGARVRVVAPSTLLPRGIERMGVEVARDMREGLDGADIVMMLRLQRERMNGSFVPSSGEYFHYFGLDQKKLAYAKPDALVMHPGPMNRGVEIDSIVADGAQSVIREQVEMGVAVRMAVLEALARNLPNA</sequence>
<gene>
    <name evidence="1" type="primary">pyrB</name>
    <name type="ordered locus">RPB_2424</name>
</gene>
<reference key="1">
    <citation type="submission" date="2006-01" db="EMBL/GenBank/DDBJ databases">
        <title>Complete sequence of Rhodopseudomonas palustris HaA2.</title>
        <authorList>
            <consortium name="US DOE Joint Genome Institute"/>
            <person name="Copeland A."/>
            <person name="Lucas S."/>
            <person name="Lapidus A."/>
            <person name="Barry K."/>
            <person name="Detter J.C."/>
            <person name="Glavina T."/>
            <person name="Hammon N."/>
            <person name="Israni S."/>
            <person name="Pitluck S."/>
            <person name="Chain P."/>
            <person name="Malfatti S."/>
            <person name="Shin M."/>
            <person name="Vergez L."/>
            <person name="Schmutz J."/>
            <person name="Larimer F."/>
            <person name="Land M."/>
            <person name="Hauser L."/>
            <person name="Pelletier D.A."/>
            <person name="Kyrpides N."/>
            <person name="Anderson I."/>
            <person name="Oda Y."/>
            <person name="Harwood C.S."/>
            <person name="Richardson P."/>
        </authorList>
    </citation>
    <scope>NUCLEOTIDE SEQUENCE [LARGE SCALE GENOMIC DNA]</scope>
    <source>
        <strain>HaA2</strain>
    </source>
</reference>